<sequence>MPRAHDDNWDLASSVGATATMVAAGRALATKDPRGLINDPFAEPLVRAVGLDFFTKLIDGELDIATTGNLSPGRAQAMIDGIAVRTKYFDDYFRTATDGGVRQVVILAAGLDARAYRLPWPAGTVVYEIDQPQVIDFKTTTLAGIGAKPTAIRRTVYIDLRADWPAALQAAGLDSTAPTAWLAEGMLIYLPPDPRTGCSTTAPNSVLRAARSLPNLSRALWISTQAGYEKWRIRFASTAWTSTWRRWCIPANAATSSTTCAPRAGTLRAQCGPTYSGAMVCPFPPHTTTIRSAKSSSSAVV</sequence>
<organism>
    <name type="scientific">Mycobacterium tuberculosis (strain ATCC 25177 / H37Ra)</name>
    <dbReference type="NCBI Taxonomy" id="419947"/>
    <lineage>
        <taxon>Bacteria</taxon>
        <taxon>Bacillati</taxon>
        <taxon>Actinomycetota</taxon>
        <taxon>Actinomycetes</taxon>
        <taxon>Mycobacteriales</taxon>
        <taxon>Mycobacteriaceae</taxon>
        <taxon>Mycobacterium</taxon>
        <taxon>Mycobacterium tuberculosis complex</taxon>
    </lineage>
</organism>
<protein>
    <recommendedName>
        <fullName>Putative S-adenosyl-L-methionine-dependent methyltransferase MRA_0733</fullName>
        <ecNumber>2.1.1.-</ecNumber>
    </recommendedName>
</protein>
<comment type="function">
    <text evidence="1">Exhibits S-adenosyl-L-methionine-dependent methyltransferase activity.</text>
</comment>
<comment type="similarity">
    <text evidence="2">Belongs to the UPF0677 family.</text>
</comment>
<feature type="chain" id="PRO_0000361230" description="Putative S-adenosyl-L-methionine-dependent methyltransferase MRA_0733">
    <location>
        <begin position="1"/>
        <end position="301"/>
    </location>
</feature>
<feature type="binding site" evidence="1">
    <location>
        <position position="130"/>
    </location>
    <ligand>
        <name>S-adenosyl-L-methionine</name>
        <dbReference type="ChEBI" id="CHEBI:59789"/>
    </ligand>
</feature>
<feature type="binding site" evidence="1">
    <location>
        <begin position="159"/>
        <end position="160"/>
    </location>
    <ligand>
        <name>S-adenosyl-L-methionine</name>
        <dbReference type="ChEBI" id="CHEBI:59789"/>
    </ligand>
</feature>
<gene>
    <name type="ordered locus">MRA_0733</name>
</gene>
<reference key="1">
    <citation type="journal article" date="2008" name="PLoS ONE">
        <title>Genetic basis of virulence attenuation revealed by comparative genomic analysis of Mycobacterium tuberculosis strain H37Ra versus H37Rv.</title>
        <authorList>
            <person name="Zheng H."/>
            <person name="Lu L."/>
            <person name="Wang B."/>
            <person name="Pu S."/>
            <person name="Zhang X."/>
            <person name="Zhu G."/>
            <person name="Shi W."/>
            <person name="Zhang L."/>
            <person name="Wang H."/>
            <person name="Wang S."/>
            <person name="Zhao G."/>
            <person name="Zhang Y."/>
        </authorList>
    </citation>
    <scope>NUCLEOTIDE SEQUENCE [LARGE SCALE GENOMIC DNA]</scope>
    <source>
        <strain>ATCC 25177 / H37Ra</strain>
    </source>
</reference>
<keyword id="KW-0489">Methyltransferase</keyword>
<keyword id="KW-1185">Reference proteome</keyword>
<keyword id="KW-0949">S-adenosyl-L-methionine</keyword>
<keyword id="KW-0808">Transferase</keyword>
<dbReference type="EC" id="2.1.1.-"/>
<dbReference type="EMBL" id="CP000611">
    <property type="protein sequence ID" value="ABQ72461.1"/>
    <property type="molecule type" value="Genomic_DNA"/>
</dbReference>
<dbReference type="SMR" id="A5U0B1"/>
<dbReference type="KEGG" id="mra:MRA_0733"/>
<dbReference type="eggNOG" id="COG3315">
    <property type="taxonomic scope" value="Bacteria"/>
</dbReference>
<dbReference type="HOGENOM" id="CLU_923843_0_0_11"/>
<dbReference type="Proteomes" id="UP000001988">
    <property type="component" value="Chromosome"/>
</dbReference>
<dbReference type="GO" id="GO:0008168">
    <property type="term" value="F:methyltransferase activity"/>
    <property type="evidence" value="ECO:0007669"/>
    <property type="project" value="UniProtKB-KW"/>
</dbReference>
<dbReference type="GO" id="GO:0032259">
    <property type="term" value="P:methylation"/>
    <property type="evidence" value="ECO:0007669"/>
    <property type="project" value="UniProtKB-KW"/>
</dbReference>
<dbReference type="Gene3D" id="3.40.50.150">
    <property type="entry name" value="Vaccinia Virus protein VP39"/>
    <property type="match status" value="1"/>
</dbReference>
<dbReference type="InterPro" id="IPR007213">
    <property type="entry name" value="Ppm1/Ppm2/Tcmp"/>
</dbReference>
<dbReference type="InterPro" id="IPR029063">
    <property type="entry name" value="SAM-dependent_MTases_sf"/>
</dbReference>
<dbReference type="InterPro" id="IPR011610">
    <property type="entry name" value="SAM_mthyl_Trfase_ML2640-like"/>
</dbReference>
<dbReference type="NCBIfam" id="TIGR00027">
    <property type="entry name" value="mthyl_TIGR00027"/>
    <property type="match status" value="1"/>
</dbReference>
<dbReference type="PANTHER" id="PTHR43619">
    <property type="entry name" value="S-ADENOSYL-L-METHIONINE-DEPENDENT METHYLTRANSFERASE YKTD-RELATED"/>
    <property type="match status" value="1"/>
</dbReference>
<dbReference type="PANTHER" id="PTHR43619:SF2">
    <property type="entry name" value="S-ADENOSYL-L-METHIONINE-DEPENDENT METHYLTRANSFERASES SUPERFAMILY PROTEIN"/>
    <property type="match status" value="1"/>
</dbReference>
<dbReference type="Pfam" id="PF04072">
    <property type="entry name" value="LCM"/>
    <property type="match status" value="1"/>
</dbReference>
<dbReference type="SUPFAM" id="SSF53335">
    <property type="entry name" value="S-adenosyl-L-methionine-dependent methyltransferases"/>
    <property type="match status" value="1"/>
</dbReference>
<evidence type="ECO:0000250" key="1"/>
<evidence type="ECO:0000305" key="2"/>
<accession>A5U0B1</accession>
<proteinExistence type="inferred from homology"/>
<name>Y733_MYCTA</name>